<name>PECM_DICD3</name>
<reference key="1">
    <citation type="journal article" date="1994" name="Mol. Microbiol.">
        <title>pecS: a locus controlling pectinase, cellulase and blue pigment production in Erwinia chrysanthemi.</title>
        <authorList>
            <person name="Reverchon S."/>
            <person name="Nasser W."/>
            <person name="Robert-Baudouy J."/>
        </authorList>
    </citation>
    <scope>NUCLEOTIDE SEQUENCE [GENOMIC DNA]</scope>
    <source>
        <strain>3937</strain>
    </source>
</reference>
<reference key="2">
    <citation type="journal article" date="2011" name="J. Bacteriol.">
        <title>Genome sequence of the plant-pathogenic bacterium Dickeya dadantii 3937.</title>
        <authorList>
            <person name="Glasner J.D."/>
            <person name="Yang C.H."/>
            <person name="Reverchon S."/>
            <person name="Hugouvieux-Cotte-Pattat N."/>
            <person name="Condemine G."/>
            <person name="Bohin J.P."/>
            <person name="Van Gijsegem F."/>
            <person name="Yang S."/>
            <person name="Franza T."/>
            <person name="Expert D."/>
            <person name="Plunkett G. III"/>
            <person name="San Francisco M.J."/>
            <person name="Charkowski A.O."/>
            <person name="Py B."/>
            <person name="Bell K."/>
            <person name="Rauscher L."/>
            <person name="Rodriguez-Palenzuela P."/>
            <person name="Toussaint A."/>
            <person name="Holeva M.C."/>
            <person name="He S.Y."/>
            <person name="Douet V."/>
            <person name="Boccara M."/>
            <person name="Blanco C."/>
            <person name="Toth I."/>
            <person name="Anderson B.D."/>
            <person name="Biehl B.S."/>
            <person name="Mau B."/>
            <person name="Flynn S.M."/>
            <person name="Barras F."/>
            <person name="Lindeberg M."/>
            <person name="Birch P.R."/>
            <person name="Tsuyumu S."/>
            <person name="Shi X."/>
            <person name="Hibbing M."/>
            <person name="Yap M.N."/>
            <person name="Carpentier M."/>
            <person name="Dassa E."/>
            <person name="Umehara M."/>
            <person name="Kim J.F."/>
            <person name="Rusch M."/>
            <person name="Soni P."/>
            <person name="Mayhew G.F."/>
            <person name="Fouts D.E."/>
            <person name="Gill S.R."/>
            <person name="Blattner F.R."/>
            <person name="Keen N.T."/>
            <person name="Perna N.T."/>
        </authorList>
    </citation>
    <scope>NUCLEOTIDE SEQUENCE [LARGE SCALE GENOMIC DNA]</scope>
    <source>
        <strain>3937</strain>
    </source>
</reference>
<evidence type="ECO:0000255" key="1"/>
<evidence type="ECO:0000305" key="2"/>
<keyword id="KW-1003">Cell membrane</keyword>
<keyword id="KW-0472">Membrane</keyword>
<keyword id="KW-1185">Reference proteome</keyword>
<keyword id="KW-0677">Repeat</keyword>
<keyword id="KW-0812">Transmembrane</keyword>
<keyword id="KW-1133">Transmembrane helix</keyword>
<keyword id="KW-0813">Transport</keyword>
<comment type="function">
    <text>Involved in pectinase, cellulase, and blue pigment regulation.</text>
</comment>
<comment type="subcellular location">
    <subcellularLocation>
        <location>Cell membrane</location>
        <topology>Multi-pass membrane protein</topology>
    </subcellularLocation>
</comment>
<comment type="similarity">
    <text evidence="2">Belongs to the EamA transporter family.</text>
</comment>
<feature type="chain" id="PRO_0000108151" description="Protein PecM">
    <location>
        <begin position="1"/>
        <end position="297"/>
    </location>
</feature>
<feature type="transmembrane region" description="Helical" evidence="1">
    <location>
        <begin position="6"/>
        <end position="26"/>
    </location>
</feature>
<feature type="transmembrane region" description="Helical" evidence="1">
    <location>
        <begin position="38"/>
        <end position="58"/>
    </location>
</feature>
<feature type="transmembrane region" description="Helical" evidence="1">
    <location>
        <begin position="60"/>
        <end position="80"/>
    </location>
</feature>
<feature type="transmembrane region" description="Helical" evidence="1">
    <location>
        <begin position="86"/>
        <end position="106"/>
    </location>
</feature>
<feature type="transmembrane region" description="Helical" evidence="1">
    <location>
        <begin position="116"/>
        <end position="136"/>
    </location>
</feature>
<feature type="transmembrane region" description="Helical" evidence="1">
    <location>
        <begin position="138"/>
        <end position="158"/>
    </location>
</feature>
<feature type="transmembrane region" description="Helical" evidence="1">
    <location>
        <begin position="167"/>
        <end position="187"/>
    </location>
</feature>
<feature type="transmembrane region" description="Helical" evidence="1">
    <location>
        <begin position="203"/>
        <end position="223"/>
    </location>
</feature>
<feature type="transmembrane region" description="Helical" evidence="1">
    <location>
        <begin position="231"/>
        <end position="251"/>
    </location>
</feature>
<feature type="transmembrane region" description="Helical" evidence="1">
    <location>
        <begin position="261"/>
        <end position="281"/>
    </location>
</feature>
<feature type="domain" description="EamA 1">
    <location>
        <begin position="12"/>
        <end position="130"/>
    </location>
</feature>
<feature type="domain" description="EamA 2">
    <location>
        <begin position="149"/>
        <end position="276"/>
    </location>
</feature>
<proteinExistence type="inferred from homology"/>
<protein>
    <recommendedName>
        <fullName>Protein PecM</fullName>
    </recommendedName>
</protein>
<dbReference type="EMBL" id="X74409">
    <property type="protein sequence ID" value="CAA52428.1"/>
    <property type="molecule type" value="Genomic_DNA"/>
</dbReference>
<dbReference type="EMBL" id="CP002038">
    <property type="protein sequence ID" value="ADN00618.1"/>
    <property type="molecule type" value="Genomic_DNA"/>
</dbReference>
<dbReference type="PIR" id="S35974">
    <property type="entry name" value="S35974"/>
</dbReference>
<dbReference type="RefSeq" id="WP_013320013.1">
    <property type="nucleotide sequence ID" value="NC_014500.1"/>
</dbReference>
<dbReference type="SMR" id="P42194"/>
<dbReference type="STRING" id="198628.Dda3937_00975"/>
<dbReference type="TCDB" id="2.A.7.3.3">
    <property type="family name" value="the drug/metabolite transporter (dmt) superfamily"/>
</dbReference>
<dbReference type="KEGG" id="ddd:Dda3937_00975"/>
<dbReference type="PATRIC" id="fig|198628.6.peg.4370"/>
<dbReference type="eggNOG" id="COG0697">
    <property type="taxonomic scope" value="Bacteria"/>
</dbReference>
<dbReference type="HOGENOM" id="CLU_033863_2_2_6"/>
<dbReference type="OrthoDB" id="5430053at2"/>
<dbReference type="Proteomes" id="UP000006859">
    <property type="component" value="Chromosome"/>
</dbReference>
<dbReference type="GO" id="GO:0005886">
    <property type="term" value="C:plasma membrane"/>
    <property type="evidence" value="ECO:0000314"/>
    <property type="project" value="ASAP"/>
</dbReference>
<dbReference type="InterPro" id="IPR050638">
    <property type="entry name" value="AA-Vitamin_Transporters"/>
</dbReference>
<dbReference type="InterPro" id="IPR004779">
    <property type="entry name" value="CO/AA/NH_transpt"/>
</dbReference>
<dbReference type="InterPro" id="IPR000620">
    <property type="entry name" value="EamA_dom"/>
</dbReference>
<dbReference type="NCBIfam" id="TIGR00950">
    <property type="entry name" value="2A78"/>
    <property type="match status" value="1"/>
</dbReference>
<dbReference type="PANTHER" id="PTHR32322:SF2">
    <property type="entry name" value="EAMA DOMAIN-CONTAINING PROTEIN"/>
    <property type="match status" value="1"/>
</dbReference>
<dbReference type="PANTHER" id="PTHR32322">
    <property type="entry name" value="INNER MEMBRANE TRANSPORTER"/>
    <property type="match status" value="1"/>
</dbReference>
<dbReference type="Pfam" id="PF00892">
    <property type="entry name" value="EamA"/>
    <property type="match status" value="2"/>
</dbReference>
<dbReference type="SUPFAM" id="SSF103481">
    <property type="entry name" value="Multidrug resistance efflux transporter EmrE"/>
    <property type="match status" value="2"/>
</dbReference>
<sequence>MKLKDFAFYAPCVWGTTYFVTTQFLPADKPLLAALIRALPAGIILILGKNLPPVGWLWRLFVLGALNIGVFFVMLFFAAYRLPGGVVALVGSLQPLIVILLSFLLLTQPVLKKQMVAAVAGGIGIVLLISLPKAPLNPAGLVASALATMSMASGLVLTKKWGRPAGMTMLTFTGWQLFCGGLVILPVQMLTEPLPDLVTLTNLAGYLYLAIPGSLLAYFMWFSGLEANSPVIMSLLGFLSPLVALLLGFLFLQQGLSGAQLVGVVFIFSALIIVQDISLFSRRKKVKPLEQSDCVIK</sequence>
<gene>
    <name type="primary">pecM</name>
    <name type="ordered locus">Dda3937_00975</name>
</gene>
<accession>P42194</accession>
<accession>E0SMH9</accession>
<organism>
    <name type="scientific">Dickeya dadantii (strain 3937)</name>
    <name type="common">Erwinia chrysanthemi (strain 3937)</name>
    <dbReference type="NCBI Taxonomy" id="198628"/>
    <lineage>
        <taxon>Bacteria</taxon>
        <taxon>Pseudomonadati</taxon>
        <taxon>Pseudomonadota</taxon>
        <taxon>Gammaproteobacteria</taxon>
        <taxon>Enterobacterales</taxon>
        <taxon>Pectobacteriaceae</taxon>
        <taxon>Dickeya</taxon>
    </lineage>
</organism>